<comment type="catalytic activity">
    <reaction>
        <text>an acyl phosphate + H2O = a carboxylate + phosphate + H(+)</text>
        <dbReference type="Rhea" id="RHEA:14965"/>
        <dbReference type="ChEBI" id="CHEBI:15377"/>
        <dbReference type="ChEBI" id="CHEBI:15378"/>
        <dbReference type="ChEBI" id="CHEBI:29067"/>
        <dbReference type="ChEBI" id="CHEBI:43474"/>
        <dbReference type="ChEBI" id="CHEBI:59918"/>
        <dbReference type="EC" id="3.6.1.7"/>
    </reaction>
</comment>
<comment type="similarity">
    <text evidence="2">Belongs to the acylphosphatase family.</text>
</comment>
<dbReference type="EC" id="3.6.1.7"/>
<dbReference type="EMBL" id="CP000423">
    <property type="protein sequence ID" value="ABJ70449.1"/>
    <property type="molecule type" value="Genomic_DNA"/>
</dbReference>
<dbReference type="RefSeq" id="WP_003564577.1">
    <property type="nucleotide sequence ID" value="NC_008526.1"/>
</dbReference>
<dbReference type="RefSeq" id="YP_806891.1">
    <property type="nucleotide sequence ID" value="NC_008526.1"/>
</dbReference>
<dbReference type="SMR" id="Q038C3"/>
<dbReference type="STRING" id="321967.LSEI_1676"/>
<dbReference type="PaxDb" id="321967-LSEI_1676"/>
<dbReference type="KEGG" id="lca:LSEI_1676"/>
<dbReference type="PATRIC" id="fig|321967.11.peg.1657"/>
<dbReference type="HOGENOM" id="CLU_141932_2_1_9"/>
<dbReference type="Proteomes" id="UP000001651">
    <property type="component" value="Chromosome"/>
</dbReference>
<dbReference type="GO" id="GO:0003998">
    <property type="term" value="F:acylphosphatase activity"/>
    <property type="evidence" value="ECO:0007669"/>
    <property type="project" value="UniProtKB-EC"/>
</dbReference>
<dbReference type="Gene3D" id="3.30.70.100">
    <property type="match status" value="1"/>
</dbReference>
<dbReference type="InterPro" id="IPR020456">
    <property type="entry name" value="Acylphosphatase"/>
</dbReference>
<dbReference type="InterPro" id="IPR001792">
    <property type="entry name" value="Acylphosphatase-like_dom"/>
</dbReference>
<dbReference type="InterPro" id="IPR036046">
    <property type="entry name" value="Acylphosphatase-like_dom_sf"/>
</dbReference>
<dbReference type="InterPro" id="IPR017968">
    <property type="entry name" value="Acylphosphatase_CS"/>
</dbReference>
<dbReference type="PANTHER" id="PTHR47268">
    <property type="entry name" value="ACYLPHOSPHATASE"/>
    <property type="match status" value="1"/>
</dbReference>
<dbReference type="PANTHER" id="PTHR47268:SF4">
    <property type="entry name" value="ACYLPHOSPHATASE"/>
    <property type="match status" value="1"/>
</dbReference>
<dbReference type="Pfam" id="PF00708">
    <property type="entry name" value="Acylphosphatase"/>
    <property type="match status" value="1"/>
</dbReference>
<dbReference type="SUPFAM" id="SSF54975">
    <property type="entry name" value="Acylphosphatase/BLUF domain-like"/>
    <property type="match status" value="1"/>
</dbReference>
<dbReference type="PROSITE" id="PS00150">
    <property type="entry name" value="ACYLPHOSPHATASE_1"/>
    <property type="match status" value="1"/>
</dbReference>
<dbReference type="PROSITE" id="PS51160">
    <property type="entry name" value="ACYLPHOSPHATASE_3"/>
    <property type="match status" value="1"/>
</dbReference>
<accession>Q038C3</accession>
<name>ACYP_LACP3</name>
<proteinExistence type="inferred from homology"/>
<protein>
    <recommendedName>
        <fullName>Acylphosphatase</fullName>
        <ecNumber>3.6.1.7</ecNumber>
    </recommendedName>
    <alternativeName>
        <fullName>Acylphosphate phosphohydrolase</fullName>
    </alternativeName>
</protein>
<organism>
    <name type="scientific">Lacticaseibacillus paracasei (strain ATCC 334 / BCRC 17002 / CCUG 31169 / CIP 107868 / KCTC 3260 / NRRL B-441)</name>
    <name type="common">Lactobacillus paracasei</name>
    <dbReference type="NCBI Taxonomy" id="321967"/>
    <lineage>
        <taxon>Bacteria</taxon>
        <taxon>Bacillati</taxon>
        <taxon>Bacillota</taxon>
        <taxon>Bacilli</taxon>
        <taxon>Lactobacillales</taxon>
        <taxon>Lactobacillaceae</taxon>
        <taxon>Lacticaseibacillus</taxon>
    </lineage>
</organism>
<feature type="chain" id="PRO_0000326725" description="Acylphosphatase">
    <location>
        <begin position="1"/>
        <end position="93"/>
    </location>
</feature>
<feature type="domain" description="Acylphosphatase-like" evidence="1">
    <location>
        <begin position="5"/>
        <end position="93"/>
    </location>
</feature>
<feature type="active site" evidence="1">
    <location>
        <position position="20"/>
    </location>
</feature>
<feature type="active site" evidence="1">
    <location>
        <position position="38"/>
    </location>
</feature>
<evidence type="ECO:0000255" key="1">
    <source>
        <dbReference type="PROSITE-ProRule" id="PRU00520"/>
    </source>
</evidence>
<evidence type="ECO:0000305" key="2"/>
<reference key="1">
    <citation type="journal article" date="2006" name="Proc. Natl. Acad. Sci. U.S.A.">
        <title>Comparative genomics of the lactic acid bacteria.</title>
        <authorList>
            <person name="Makarova K.S."/>
            <person name="Slesarev A."/>
            <person name="Wolf Y.I."/>
            <person name="Sorokin A."/>
            <person name="Mirkin B."/>
            <person name="Koonin E.V."/>
            <person name="Pavlov A."/>
            <person name="Pavlova N."/>
            <person name="Karamychev V."/>
            <person name="Polouchine N."/>
            <person name="Shakhova V."/>
            <person name="Grigoriev I."/>
            <person name="Lou Y."/>
            <person name="Rohksar D."/>
            <person name="Lucas S."/>
            <person name="Huang K."/>
            <person name="Goodstein D.M."/>
            <person name="Hawkins T."/>
            <person name="Plengvidhya V."/>
            <person name="Welker D."/>
            <person name="Hughes J."/>
            <person name="Goh Y."/>
            <person name="Benson A."/>
            <person name="Baldwin K."/>
            <person name="Lee J.-H."/>
            <person name="Diaz-Muniz I."/>
            <person name="Dosti B."/>
            <person name="Smeianov V."/>
            <person name="Wechter W."/>
            <person name="Barabote R."/>
            <person name="Lorca G."/>
            <person name="Altermann E."/>
            <person name="Barrangou R."/>
            <person name="Ganesan B."/>
            <person name="Xie Y."/>
            <person name="Rawsthorne H."/>
            <person name="Tamir D."/>
            <person name="Parker C."/>
            <person name="Breidt F."/>
            <person name="Broadbent J.R."/>
            <person name="Hutkins R."/>
            <person name="O'Sullivan D."/>
            <person name="Steele J."/>
            <person name="Unlu G."/>
            <person name="Saier M.H. Jr."/>
            <person name="Klaenhammer T."/>
            <person name="Richardson P."/>
            <person name="Kozyavkin S."/>
            <person name="Weimer B.C."/>
            <person name="Mills D.A."/>
        </authorList>
    </citation>
    <scope>NUCLEOTIDE SEQUENCE [LARGE SCALE GENOMIC DNA]</scope>
    <source>
        <strain>ATCC 334 / BCRC 17002 / CCUG 31169 / CIP 107868 / KCTC 3260 / NRRL B-441</strain>
    </source>
</reference>
<sequence>MVKLAKQIVVRGRVQGVGFRWATKMIADNLDISGTIENRSDGSVFIQAAGEPLNLAKFVAKVKAGPNPYANVSTYEEQPLEDVPNFRGFQVTG</sequence>
<gene>
    <name type="primary">acyP</name>
    <name type="ordered locus">LSEI_1676</name>
</gene>
<keyword id="KW-0378">Hydrolase</keyword>
<keyword id="KW-1185">Reference proteome</keyword>